<sequence length="368" mass="38940">MTVKLTIDCMGGDHGPSVTVPAAVKFVRSHPDAHLMLVGIESAIRAQLKKCKALGEPALSVVPATEVVAMDDPVEVALRKKKDSSMRVALNHVKEGAAQACISAGNTGALMAVSRYVLKTLPGIERPAIAFALPNPTGYTMMLDLGANVDCEPQHLLQFAEMGHALVAALEGKERPTIGLLNIGEEVIKGNETIKRAGELLRASTLNFRGNVEGNDIYKGTVDVIVCDGFVGNVALKTSEGLAQMLADIIKEEFSRSLLSKLMAILALPVLLRFKKRVDHRQYNGAALLGLRSLVIKSHGSADAYAFEWAIKRGYDAVKNGVLERLSRAMAENAAPLGESGRDANGAGQASPSAGQPAEPSAALSSKT</sequence>
<reference key="1">
    <citation type="journal article" date="2004" name="Proc. Natl. Acad. Sci. U.S.A.">
        <title>Structural flexibility in the Burkholderia mallei genome.</title>
        <authorList>
            <person name="Nierman W.C."/>
            <person name="DeShazer D."/>
            <person name="Kim H.S."/>
            <person name="Tettelin H."/>
            <person name="Nelson K.E."/>
            <person name="Feldblyum T.V."/>
            <person name="Ulrich R.L."/>
            <person name="Ronning C.M."/>
            <person name="Brinkac L.M."/>
            <person name="Daugherty S.C."/>
            <person name="Davidsen T.D."/>
            <person name="DeBoy R.T."/>
            <person name="Dimitrov G."/>
            <person name="Dodson R.J."/>
            <person name="Durkin A.S."/>
            <person name="Gwinn M.L."/>
            <person name="Haft D.H."/>
            <person name="Khouri H.M."/>
            <person name="Kolonay J.F."/>
            <person name="Madupu R."/>
            <person name="Mohammoud Y."/>
            <person name="Nelson W.C."/>
            <person name="Radune D."/>
            <person name="Romero C.M."/>
            <person name="Sarria S."/>
            <person name="Selengut J."/>
            <person name="Shamblin C."/>
            <person name="Sullivan S.A."/>
            <person name="White O."/>
            <person name="Yu Y."/>
            <person name="Zafar N."/>
            <person name="Zhou L."/>
            <person name="Fraser C.M."/>
        </authorList>
    </citation>
    <scope>NUCLEOTIDE SEQUENCE [LARGE SCALE GENOMIC DNA]</scope>
    <source>
        <strain>ATCC 23344</strain>
    </source>
</reference>
<dbReference type="EC" id="2.3.1.274" evidence="1"/>
<dbReference type="EMBL" id="CP000010">
    <property type="protein sequence ID" value="AAU49387.1"/>
    <property type="molecule type" value="Genomic_DNA"/>
</dbReference>
<dbReference type="RefSeq" id="WP_004192749.1">
    <property type="nucleotide sequence ID" value="NC_006348.1"/>
</dbReference>
<dbReference type="RefSeq" id="YP_102325.1">
    <property type="nucleotide sequence ID" value="NC_006348.1"/>
</dbReference>
<dbReference type="SMR" id="Q62LU3"/>
<dbReference type="GeneID" id="93061023"/>
<dbReference type="KEGG" id="bma:BMA0529"/>
<dbReference type="PATRIC" id="fig|243160.12.peg.543"/>
<dbReference type="eggNOG" id="COG0416">
    <property type="taxonomic scope" value="Bacteria"/>
</dbReference>
<dbReference type="HOGENOM" id="CLU_039379_1_0_4"/>
<dbReference type="UniPathway" id="UPA00085"/>
<dbReference type="Proteomes" id="UP000006693">
    <property type="component" value="Chromosome 1"/>
</dbReference>
<dbReference type="GO" id="GO:0005737">
    <property type="term" value="C:cytoplasm"/>
    <property type="evidence" value="ECO:0007669"/>
    <property type="project" value="UniProtKB-SubCell"/>
</dbReference>
<dbReference type="GO" id="GO:0043811">
    <property type="term" value="F:phosphate:acyl-[acyl carrier protein] acyltransferase activity"/>
    <property type="evidence" value="ECO:0007669"/>
    <property type="project" value="UniProtKB-UniRule"/>
</dbReference>
<dbReference type="GO" id="GO:0006633">
    <property type="term" value="P:fatty acid biosynthetic process"/>
    <property type="evidence" value="ECO:0007669"/>
    <property type="project" value="UniProtKB-UniRule"/>
</dbReference>
<dbReference type="GO" id="GO:0008654">
    <property type="term" value="P:phospholipid biosynthetic process"/>
    <property type="evidence" value="ECO:0007669"/>
    <property type="project" value="UniProtKB-KW"/>
</dbReference>
<dbReference type="Gene3D" id="3.40.718.10">
    <property type="entry name" value="Isopropylmalate Dehydrogenase"/>
    <property type="match status" value="1"/>
</dbReference>
<dbReference type="HAMAP" id="MF_00019">
    <property type="entry name" value="PlsX"/>
    <property type="match status" value="1"/>
</dbReference>
<dbReference type="InterPro" id="IPR003664">
    <property type="entry name" value="FA_synthesis"/>
</dbReference>
<dbReference type="InterPro" id="IPR012281">
    <property type="entry name" value="Phospholipid_synth_PlsX-like"/>
</dbReference>
<dbReference type="NCBIfam" id="TIGR00182">
    <property type="entry name" value="plsX"/>
    <property type="match status" value="1"/>
</dbReference>
<dbReference type="PANTHER" id="PTHR30100">
    <property type="entry name" value="FATTY ACID/PHOSPHOLIPID SYNTHESIS PROTEIN PLSX"/>
    <property type="match status" value="1"/>
</dbReference>
<dbReference type="PANTHER" id="PTHR30100:SF1">
    <property type="entry name" value="PHOSPHATE ACYLTRANSFERASE"/>
    <property type="match status" value="1"/>
</dbReference>
<dbReference type="Pfam" id="PF02504">
    <property type="entry name" value="FA_synthesis"/>
    <property type="match status" value="1"/>
</dbReference>
<dbReference type="PIRSF" id="PIRSF002465">
    <property type="entry name" value="Phsphlp_syn_PlsX"/>
    <property type="match status" value="1"/>
</dbReference>
<dbReference type="SUPFAM" id="SSF53659">
    <property type="entry name" value="Isocitrate/Isopropylmalate dehydrogenase-like"/>
    <property type="match status" value="1"/>
</dbReference>
<proteinExistence type="inferred from homology"/>
<name>PLSX_BURMA</name>
<keyword id="KW-0963">Cytoplasm</keyword>
<keyword id="KW-0444">Lipid biosynthesis</keyword>
<keyword id="KW-0443">Lipid metabolism</keyword>
<keyword id="KW-0594">Phospholipid biosynthesis</keyword>
<keyword id="KW-1208">Phospholipid metabolism</keyword>
<keyword id="KW-1185">Reference proteome</keyword>
<keyword id="KW-0808">Transferase</keyword>
<comment type="function">
    <text evidence="1">Catalyzes the reversible formation of acyl-phosphate (acyl-PO(4)) from acyl-[acyl-carrier-protein] (acyl-ACP). This enzyme utilizes acyl-ACP as fatty acyl donor, but not acyl-CoA.</text>
</comment>
<comment type="catalytic activity">
    <reaction evidence="1">
        <text>a fatty acyl-[ACP] + phosphate = an acyl phosphate + holo-[ACP]</text>
        <dbReference type="Rhea" id="RHEA:42292"/>
        <dbReference type="Rhea" id="RHEA-COMP:9685"/>
        <dbReference type="Rhea" id="RHEA-COMP:14125"/>
        <dbReference type="ChEBI" id="CHEBI:43474"/>
        <dbReference type="ChEBI" id="CHEBI:59918"/>
        <dbReference type="ChEBI" id="CHEBI:64479"/>
        <dbReference type="ChEBI" id="CHEBI:138651"/>
        <dbReference type="EC" id="2.3.1.274"/>
    </reaction>
</comment>
<comment type="pathway">
    <text evidence="1">Lipid metabolism; phospholipid metabolism.</text>
</comment>
<comment type="subunit">
    <text evidence="1">Homodimer. Probably interacts with PlsY.</text>
</comment>
<comment type="subcellular location">
    <subcellularLocation>
        <location evidence="1">Cytoplasm</location>
    </subcellularLocation>
    <text evidence="1">Associated with the membrane possibly through PlsY.</text>
</comment>
<comment type="similarity">
    <text evidence="1">Belongs to the PlsX family.</text>
</comment>
<evidence type="ECO:0000255" key="1">
    <source>
        <dbReference type="HAMAP-Rule" id="MF_00019"/>
    </source>
</evidence>
<evidence type="ECO:0000256" key="2">
    <source>
        <dbReference type="SAM" id="MobiDB-lite"/>
    </source>
</evidence>
<feature type="chain" id="PRO_0000189856" description="Phosphate acyltransferase">
    <location>
        <begin position="1"/>
        <end position="368"/>
    </location>
</feature>
<feature type="region of interest" description="Disordered" evidence="2">
    <location>
        <begin position="334"/>
        <end position="368"/>
    </location>
</feature>
<organism>
    <name type="scientific">Burkholderia mallei (strain ATCC 23344)</name>
    <dbReference type="NCBI Taxonomy" id="243160"/>
    <lineage>
        <taxon>Bacteria</taxon>
        <taxon>Pseudomonadati</taxon>
        <taxon>Pseudomonadota</taxon>
        <taxon>Betaproteobacteria</taxon>
        <taxon>Burkholderiales</taxon>
        <taxon>Burkholderiaceae</taxon>
        <taxon>Burkholderia</taxon>
        <taxon>pseudomallei group</taxon>
    </lineage>
</organism>
<gene>
    <name evidence="1" type="primary">plsX</name>
    <name type="ordered locus">BMA0529</name>
</gene>
<protein>
    <recommendedName>
        <fullName evidence="1">Phosphate acyltransferase</fullName>
        <ecNumber evidence="1">2.3.1.274</ecNumber>
    </recommendedName>
    <alternativeName>
        <fullName evidence="1">Acyl-ACP phosphotransacylase</fullName>
    </alternativeName>
    <alternativeName>
        <fullName evidence="1">Acyl-[acyl-carrier-protein]--phosphate acyltransferase</fullName>
    </alternativeName>
    <alternativeName>
        <fullName evidence="1">Phosphate-acyl-ACP acyltransferase</fullName>
    </alternativeName>
</protein>
<accession>Q62LU3</accession>